<gene>
    <name evidence="1 3" type="primary">murL</name>
    <name evidence="6" type="ORF">MCAG_01010</name>
</gene>
<dbReference type="EC" id="5.1.1.23" evidence="1 2"/>
<dbReference type="EMBL" id="GG657738">
    <property type="protein sequence ID" value="EEP70683.1"/>
    <property type="molecule type" value="Genomic_DNA"/>
</dbReference>
<dbReference type="RefSeq" id="WP_007071959.1">
    <property type="nucleotide sequence ID" value="NZ_GG657738.1"/>
</dbReference>
<dbReference type="STRING" id="219305.MCAG_01010"/>
<dbReference type="eggNOG" id="COG1365">
    <property type="taxonomic scope" value="Bacteria"/>
</dbReference>
<dbReference type="HOGENOM" id="CLU_045660_0_0_11"/>
<dbReference type="OrthoDB" id="9768152at2"/>
<dbReference type="UniPathway" id="UPA00219"/>
<dbReference type="Proteomes" id="UP000010307">
    <property type="component" value="Unassembled WGS sequence"/>
</dbReference>
<dbReference type="GO" id="GO:0005737">
    <property type="term" value="C:cytoplasm"/>
    <property type="evidence" value="ECO:0007669"/>
    <property type="project" value="UniProtKB-UniRule"/>
</dbReference>
<dbReference type="GO" id="GO:0016855">
    <property type="term" value="F:racemase and epimerase activity, acting on amino acids and derivatives"/>
    <property type="evidence" value="ECO:0007669"/>
    <property type="project" value="UniProtKB-UniRule"/>
</dbReference>
<dbReference type="GO" id="GO:0051301">
    <property type="term" value="P:cell division"/>
    <property type="evidence" value="ECO:0007669"/>
    <property type="project" value="UniProtKB-KW"/>
</dbReference>
<dbReference type="GO" id="GO:0071555">
    <property type="term" value="P:cell wall organization"/>
    <property type="evidence" value="ECO:0007669"/>
    <property type="project" value="UniProtKB-KW"/>
</dbReference>
<dbReference type="GO" id="GO:0009252">
    <property type="term" value="P:peptidoglycan biosynthetic process"/>
    <property type="evidence" value="ECO:0007669"/>
    <property type="project" value="UniProtKB-UniRule"/>
</dbReference>
<dbReference type="GO" id="GO:0008360">
    <property type="term" value="P:regulation of cell shape"/>
    <property type="evidence" value="ECO:0007669"/>
    <property type="project" value="UniProtKB-KW"/>
</dbReference>
<dbReference type="HAMAP" id="MF_02209">
    <property type="entry name" value="MurL"/>
    <property type="match status" value="1"/>
</dbReference>
<dbReference type="InterPro" id="IPR043689">
    <property type="entry name" value="MurL"/>
</dbReference>
<feature type="chain" id="PRO_0000446511" description="UDP-N-acetyl-alpha-D-muramoyl-L-alanyl-L-glutamate epimerase">
    <location>
        <begin position="1"/>
        <end position="447"/>
    </location>
</feature>
<keyword id="KW-0131">Cell cycle</keyword>
<keyword id="KW-0132">Cell division</keyword>
<keyword id="KW-0133">Cell shape</keyword>
<keyword id="KW-0961">Cell wall biogenesis/degradation</keyword>
<keyword id="KW-0413">Isomerase</keyword>
<keyword id="KW-0573">Peptidoglycan synthesis</keyword>
<keyword id="KW-1185">Reference proteome</keyword>
<name>MURL_MICS3</name>
<comment type="function">
    <text evidence="1 2">Cell wall formation. Catalyzes epimerization of the terminal L-glutamate in UDP-N-acetyl-alpha-D-muramoyl-L-alanyl-L-glutamate.</text>
</comment>
<comment type="catalytic activity">
    <reaction evidence="1 2">
        <text>UDP-N-acetyl-alpha-D-muramoyl-L-alanyl-L-glutamate + ATP + H2O = UDP-N-acetyl-alpha-D-muramoyl-L-alanyl-D-glutamate + AMP + diphosphate + H(+)</text>
        <dbReference type="Rhea" id="RHEA:58812"/>
        <dbReference type="ChEBI" id="CHEBI:15377"/>
        <dbReference type="ChEBI" id="CHEBI:15378"/>
        <dbReference type="ChEBI" id="CHEBI:30616"/>
        <dbReference type="ChEBI" id="CHEBI:33019"/>
        <dbReference type="ChEBI" id="CHEBI:83900"/>
        <dbReference type="ChEBI" id="CHEBI:142725"/>
        <dbReference type="ChEBI" id="CHEBI:456215"/>
        <dbReference type="EC" id="5.1.1.23"/>
    </reaction>
</comment>
<comment type="pathway">
    <text evidence="1 5">Cell wall biogenesis; peptidoglycan biosynthesis.</text>
</comment>
<comment type="similarity">
    <text evidence="1 4">Belongs to the MurL family.</text>
</comment>
<evidence type="ECO:0000255" key="1">
    <source>
        <dbReference type="HAMAP-Rule" id="MF_02209"/>
    </source>
</evidence>
<evidence type="ECO:0000269" key="2">
    <source>
    </source>
</evidence>
<evidence type="ECO:0000303" key="3">
    <source>
    </source>
</evidence>
<evidence type="ECO:0000305" key="4"/>
<evidence type="ECO:0000305" key="5">
    <source>
    </source>
</evidence>
<evidence type="ECO:0000312" key="6">
    <source>
        <dbReference type="EMBL" id="EEP70683.1"/>
    </source>
</evidence>
<sequence>MPNEQLRRMDAFTFPSYSIDLATGEALFDYALTGPDGEQRFTEVITLPLPAEPPSDATVATLGRVLELLHVVAGVSYYKAAAPRRLVLPAPLGEAAAALVTAVYTKGLAEYAYRNQLPHVLELTPEIPAGSVPPAREYDNSDLRPLSAVGGGKDSIVSLEALRRAGLDPVPFSVNPNHVIVAVNEASGLAPLAARRRIDPVLFDLNAAGARNGHIPVTAINSLIAVATAVLNRLGPVVMSNERSASDPNLVWNGHEINHQWSKGVEAEGLLRAALAEHAGLTEPYFSLLRSLSELHIARLFAQIDRYDDVVTSCNAAFKLRDASERWCRDCPKCRFVFLAMAPFMPRERVVHIFGGDLLADETQIPGYRELLGVDGHKPFECVGEVEESVVALSLLAEQDQWRDAPVVRALVDAVPETAWSAAATSDVFTPGGPHHIPPPYAKALAQ</sequence>
<reference key="1">
    <citation type="submission" date="2009-02" db="EMBL/GenBank/DDBJ databases">
        <title>The genome sequence of Micromonospora carbonacea var. africana strain ATCC 39149.</title>
        <authorList>
            <consortium name="The Broad Institute Genome Sequencing Platform"/>
            <consortium name="Broad Institute Microbial Sequencing Center"/>
            <person name="Fischbach M."/>
            <person name="Godfrey P."/>
            <person name="Ward D."/>
            <person name="Young S."/>
            <person name="Kodira C.D."/>
            <person name="Zeng Q."/>
            <person name="Koehrsen M."/>
            <person name="Alvarado L."/>
            <person name="Berlin A.M."/>
            <person name="Borenstein D."/>
            <person name="Chen Z."/>
            <person name="Engels R."/>
            <person name="Freedman E."/>
            <person name="Gellesch M."/>
            <person name="Goldberg J."/>
            <person name="Griggs A."/>
            <person name="Gujja S."/>
            <person name="Heiman D.I."/>
            <person name="Hepburn T.A."/>
            <person name="Howarth C."/>
            <person name="Jen D."/>
            <person name="Larson L."/>
            <person name="Lewis B."/>
            <person name="Mehta T."/>
            <person name="Park D."/>
            <person name="Pearson M."/>
            <person name="Roberts A."/>
            <person name="Saif S."/>
            <person name="Shea T.D."/>
            <person name="Shenoy N."/>
            <person name="Sisk P."/>
            <person name="Stolte C."/>
            <person name="Sykes S.N."/>
            <person name="Walk T."/>
            <person name="White J."/>
            <person name="Yandava C."/>
            <person name="Straight P."/>
            <person name="Clardy J."/>
            <person name="Hung D."/>
            <person name="Kolter R."/>
            <person name="Mekalanos J."/>
            <person name="Walker S."/>
            <person name="Walsh C.T."/>
            <person name="Wieland-Brown L.C."/>
            <person name="Galagan J."/>
            <person name="Nusbaum C."/>
            <person name="Birren B."/>
        </authorList>
    </citation>
    <scope>NUCLEOTIDE SEQUENCE [LARGE SCALE GENOMIC DNA]</scope>
    <source>
        <strain>ATCC 39149 / NRRL 15099 / SCC 1413</strain>
    </source>
</reference>
<reference key="2">
    <citation type="journal article" date="2017" name="J. Am. Chem. Soc.">
        <title>A glycopeptidyl-glutamate epimerase for bacterial peptidoglycan biosynthesis.</title>
        <authorList>
            <person name="Feng R."/>
            <person name="Satoh Y."/>
            <person name="Ogasawara Y."/>
            <person name="Yoshimura T."/>
            <person name="Dairi T."/>
        </authorList>
    </citation>
    <scope>FUNCTION</scope>
    <scope>CATALYTIC ACTIVITY</scope>
    <scope>PATHWAY</scope>
    <source>
        <strain>ATCC 39149 / NRRL 15099 / SCC 1413</strain>
    </source>
</reference>
<proteinExistence type="evidence at protein level"/>
<organism>
    <name type="scientific">Micromonospora sp. (strain ATCC 39149 / NRRL 15099 / SCC 1413)</name>
    <dbReference type="NCBI Taxonomy" id="219305"/>
    <lineage>
        <taxon>Bacteria</taxon>
        <taxon>Bacillati</taxon>
        <taxon>Actinomycetota</taxon>
        <taxon>Actinomycetes</taxon>
        <taxon>Micromonosporales</taxon>
        <taxon>Micromonosporaceae</taxon>
        <taxon>Micromonospora</taxon>
    </lineage>
</organism>
<accession>C4RJF8</accession>
<protein>
    <recommendedName>
        <fullName evidence="1 4">UDP-N-acetyl-alpha-D-muramoyl-L-alanyl-L-glutamate epimerase</fullName>
        <ecNumber evidence="1 2">5.1.1.23</ecNumber>
    </recommendedName>
    <alternativeName>
        <fullName evidence="1 3">UDP-MurNAc-L-Ala-L-Glu epimerase</fullName>
    </alternativeName>
</protein>